<reference key="1">
    <citation type="journal article" date="2000" name="Yeast">
        <title>A 38 kb segment containing the cdc2 gene from the left arm of fission yeast chromosome II: sequence analysis and characterization of the genomic DNA and cDNAs encoded on the segment.</title>
        <authorList>
            <person name="Machida M."/>
            <person name="Yamazaki S."/>
            <person name="Kunihiro S."/>
            <person name="Tanaka T."/>
            <person name="Kushida N."/>
            <person name="Jinno K."/>
            <person name="Haikawa Y."/>
            <person name="Yamazaki J."/>
            <person name="Yamamoto S."/>
            <person name="Sekine M."/>
            <person name="Oguchi A."/>
            <person name="Nagai Y."/>
            <person name="Sakai M."/>
            <person name="Aoki K."/>
            <person name="Ogura K."/>
            <person name="Kudoh Y."/>
            <person name="Kikuchi H."/>
            <person name="Zhang M.Q."/>
            <person name="Yanagida M."/>
        </authorList>
    </citation>
    <scope>NUCLEOTIDE SEQUENCE [GENOMIC DNA]</scope>
    <source>
        <strain>972 / ATCC 24843</strain>
    </source>
</reference>
<reference key="2">
    <citation type="journal article" date="2002" name="Nature">
        <title>The genome sequence of Schizosaccharomyces pombe.</title>
        <authorList>
            <person name="Wood V."/>
            <person name="Gwilliam R."/>
            <person name="Rajandream M.A."/>
            <person name="Lyne M.H."/>
            <person name="Lyne R."/>
            <person name="Stewart A."/>
            <person name="Sgouros J.G."/>
            <person name="Peat N."/>
            <person name="Hayles J."/>
            <person name="Baker S.G."/>
            <person name="Basham D."/>
            <person name="Bowman S."/>
            <person name="Brooks K."/>
            <person name="Brown D."/>
            <person name="Brown S."/>
            <person name="Chillingworth T."/>
            <person name="Churcher C.M."/>
            <person name="Collins M."/>
            <person name="Connor R."/>
            <person name="Cronin A."/>
            <person name="Davis P."/>
            <person name="Feltwell T."/>
            <person name="Fraser A."/>
            <person name="Gentles S."/>
            <person name="Goble A."/>
            <person name="Hamlin N."/>
            <person name="Harris D.E."/>
            <person name="Hidalgo J."/>
            <person name="Hodgson G."/>
            <person name="Holroyd S."/>
            <person name="Hornsby T."/>
            <person name="Howarth S."/>
            <person name="Huckle E.J."/>
            <person name="Hunt S."/>
            <person name="Jagels K."/>
            <person name="James K.D."/>
            <person name="Jones L."/>
            <person name="Jones M."/>
            <person name="Leather S."/>
            <person name="McDonald S."/>
            <person name="McLean J."/>
            <person name="Mooney P."/>
            <person name="Moule S."/>
            <person name="Mungall K.L."/>
            <person name="Murphy L.D."/>
            <person name="Niblett D."/>
            <person name="Odell C."/>
            <person name="Oliver K."/>
            <person name="O'Neil S."/>
            <person name="Pearson D."/>
            <person name="Quail M.A."/>
            <person name="Rabbinowitsch E."/>
            <person name="Rutherford K.M."/>
            <person name="Rutter S."/>
            <person name="Saunders D."/>
            <person name="Seeger K."/>
            <person name="Sharp S."/>
            <person name="Skelton J."/>
            <person name="Simmonds M.N."/>
            <person name="Squares R."/>
            <person name="Squares S."/>
            <person name="Stevens K."/>
            <person name="Taylor K."/>
            <person name="Taylor R.G."/>
            <person name="Tivey A."/>
            <person name="Walsh S.V."/>
            <person name="Warren T."/>
            <person name="Whitehead S."/>
            <person name="Woodward J.R."/>
            <person name="Volckaert G."/>
            <person name="Aert R."/>
            <person name="Robben J."/>
            <person name="Grymonprez B."/>
            <person name="Weltjens I."/>
            <person name="Vanstreels E."/>
            <person name="Rieger M."/>
            <person name="Schaefer M."/>
            <person name="Mueller-Auer S."/>
            <person name="Gabel C."/>
            <person name="Fuchs M."/>
            <person name="Duesterhoeft A."/>
            <person name="Fritzc C."/>
            <person name="Holzer E."/>
            <person name="Moestl D."/>
            <person name="Hilbert H."/>
            <person name="Borzym K."/>
            <person name="Langer I."/>
            <person name="Beck A."/>
            <person name="Lehrach H."/>
            <person name="Reinhardt R."/>
            <person name="Pohl T.M."/>
            <person name="Eger P."/>
            <person name="Zimmermann W."/>
            <person name="Wedler H."/>
            <person name="Wambutt R."/>
            <person name="Purnelle B."/>
            <person name="Goffeau A."/>
            <person name="Cadieu E."/>
            <person name="Dreano S."/>
            <person name="Gloux S."/>
            <person name="Lelaure V."/>
            <person name="Mottier S."/>
            <person name="Galibert F."/>
            <person name="Aves S.J."/>
            <person name="Xiang Z."/>
            <person name="Hunt C."/>
            <person name="Moore K."/>
            <person name="Hurst S.M."/>
            <person name="Lucas M."/>
            <person name="Rochet M."/>
            <person name="Gaillardin C."/>
            <person name="Tallada V.A."/>
            <person name="Garzon A."/>
            <person name="Thode G."/>
            <person name="Daga R.R."/>
            <person name="Cruzado L."/>
            <person name="Jimenez J."/>
            <person name="Sanchez M."/>
            <person name="del Rey F."/>
            <person name="Benito J."/>
            <person name="Dominguez A."/>
            <person name="Revuelta J.L."/>
            <person name="Moreno S."/>
            <person name="Armstrong J."/>
            <person name="Forsburg S.L."/>
            <person name="Cerutti L."/>
            <person name="Lowe T."/>
            <person name="McCombie W.R."/>
            <person name="Paulsen I."/>
            <person name="Potashkin J."/>
            <person name="Shpakovski G.V."/>
            <person name="Ussery D."/>
            <person name="Barrell B.G."/>
            <person name="Nurse P."/>
        </authorList>
    </citation>
    <scope>NUCLEOTIDE SEQUENCE [LARGE SCALE GENOMIC DNA]</scope>
    <source>
        <strain>972 / ATCC 24843</strain>
    </source>
</reference>
<reference key="3">
    <citation type="journal article" date="2002" name="J. Cell Sci.">
        <title>Three proteins required for early steps in the protein secretory pathway also affect nuclear envelope structure and cell cycle progression in fission yeast.</title>
        <authorList>
            <person name="Matynia A."/>
            <person name="Salus S.S."/>
            <person name="Sazer S."/>
        </authorList>
    </citation>
    <scope>FUNCTION</scope>
</reference>
<reference key="4">
    <citation type="journal article" date="2008" name="J. Proteome Res.">
        <title>Phosphoproteome analysis of fission yeast.</title>
        <authorList>
            <person name="Wilson-Grady J.T."/>
            <person name="Villen J."/>
            <person name="Gygi S.P."/>
        </authorList>
    </citation>
    <scope>PHOSPHORYLATION [LARGE SCALE ANALYSIS] AT THR-499; SER-1042 AND SER-1044</scope>
    <scope>IDENTIFICATION BY MASS SPECTROMETRY</scope>
</reference>
<keyword id="KW-0968">Cytoplasmic vesicle</keyword>
<keyword id="KW-0256">Endoplasmic reticulum</keyword>
<keyword id="KW-0931">ER-Golgi transport</keyword>
<keyword id="KW-0472">Membrane</keyword>
<keyword id="KW-0597">Phosphoprotein</keyword>
<keyword id="KW-0653">Protein transport</keyword>
<keyword id="KW-1185">Reference proteome</keyword>
<keyword id="KW-0677">Repeat</keyword>
<keyword id="KW-0813">Transport</keyword>
<keyword id="KW-0853">WD repeat</keyword>
<dbReference type="EMBL" id="AB004537">
    <property type="protein sequence ID" value="BAA21425.1"/>
    <property type="molecule type" value="Genomic_DNA"/>
</dbReference>
<dbReference type="EMBL" id="CU329671">
    <property type="protein sequence ID" value="CAA17835.1"/>
    <property type="molecule type" value="Genomic_DNA"/>
</dbReference>
<dbReference type="PIR" id="T40765">
    <property type="entry name" value="T40765"/>
</dbReference>
<dbReference type="RefSeq" id="NP_595582.1">
    <property type="nucleotide sequence ID" value="NM_001021477.2"/>
</dbReference>
<dbReference type="SMR" id="O13637"/>
<dbReference type="BioGRID" id="277787">
    <property type="interactions" value="4"/>
</dbReference>
<dbReference type="FunCoup" id="O13637">
    <property type="interactions" value="459"/>
</dbReference>
<dbReference type="IntAct" id="O13637">
    <property type="interactions" value="1"/>
</dbReference>
<dbReference type="STRING" id="284812.O13637"/>
<dbReference type="iPTMnet" id="O13637"/>
<dbReference type="PaxDb" id="4896-SPBC8D2.20c.1"/>
<dbReference type="EnsemblFungi" id="SPBC8D2.20c.1">
    <property type="protein sequence ID" value="SPBC8D2.20c.1:pep"/>
    <property type="gene ID" value="SPBC8D2.20c"/>
</dbReference>
<dbReference type="GeneID" id="2541273"/>
<dbReference type="KEGG" id="spo:2541273"/>
<dbReference type="PomBase" id="SPBC8D2.20c">
    <property type="gene designation" value="sec31"/>
</dbReference>
<dbReference type="VEuPathDB" id="FungiDB:SPBC8D2.20c"/>
<dbReference type="eggNOG" id="KOG0307">
    <property type="taxonomic scope" value="Eukaryota"/>
</dbReference>
<dbReference type="HOGENOM" id="CLU_003033_2_0_1"/>
<dbReference type="InParanoid" id="O13637"/>
<dbReference type="OMA" id="WLERPCG"/>
<dbReference type="PhylomeDB" id="O13637"/>
<dbReference type="Reactome" id="R-SPO-204005">
    <property type="pathway name" value="COPII-mediated vesicle transport"/>
</dbReference>
<dbReference type="PRO" id="PR:O13637"/>
<dbReference type="Proteomes" id="UP000002485">
    <property type="component" value="Chromosome II"/>
</dbReference>
<dbReference type="GO" id="GO:0030127">
    <property type="term" value="C:COPII vesicle coat"/>
    <property type="evidence" value="ECO:0000318"/>
    <property type="project" value="GO_Central"/>
</dbReference>
<dbReference type="GO" id="GO:0005737">
    <property type="term" value="C:cytoplasm"/>
    <property type="evidence" value="ECO:0007005"/>
    <property type="project" value="PomBase"/>
</dbReference>
<dbReference type="GO" id="GO:0005829">
    <property type="term" value="C:cytosol"/>
    <property type="evidence" value="ECO:0007005"/>
    <property type="project" value="PomBase"/>
</dbReference>
<dbReference type="GO" id="GO:0070971">
    <property type="term" value="C:endoplasmic reticulum exit site"/>
    <property type="evidence" value="ECO:0000318"/>
    <property type="project" value="GO_Central"/>
</dbReference>
<dbReference type="GO" id="GO:0005789">
    <property type="term" value="C:endoplasmic reticulum membrane"/>
    <property type="evidence" value="ECO:0007669"/>
    <property type="project" value="UniProtKB-SubCell"/>
</dbReference>
<dbReference type="GO" id="GO:0005198">
    <property type="term" value="F:structural molecule activity"/>
    <property type="evidence" value="ECO:0000318"/>
    <property type="project" value="GO_Central"/>
</dbReference>
<dbReference type="GO" id="GO:0090110">
    <property type="term" value="P:COPII-coated vesicle cargo loading"/>
    <property type="evidence" value="ECO:0000318"/>
    <property type="project" value="GO_Central"/>
</dbReference>
<dbReference type="GO" id="GO:0090158">
    <property type="term" value="P:endoplasmic reticulum membrane organization"/>
    <property type="evidence" value="ECO:0000315"/>
    <property type="project" value="PomBase"/>
</dbReference>
<dbReference type="GO" id="GO:0007029">
    <property type="term" value="P:endoplasmic reticulum organization"/>
    <property type="evidence" value="ECO:0000318"/>
    <property type="project" value="GO_Central"/>
</dbReference>
<dbReference type="GO" id="GO:0006888">
    <property type="term" value="P:endoplasmic reticulum to Golgi vesicle-mediated transport"/>
    <property type="evidence" value="ECO:0000315"/>
    <property type="project" value="PomBase"/>
</dbReference>
<dbReference type="GO" id="GO:0015031">
    <property type="term" value="P:protein transport"/>
    <property type="evidence" value="ECO:0007669"/>
    <property type="project" value="UniProtKB-KW"/>
</dbReference>
<dbReference type="Gene3D" id="1.25.40.1030">
    <property type="match status" value="1"/>
</dbReference>
<dbReference type="Gene3D" id="1.20.940.10">
    <property type="entry name" value="Functional domain of the splicing factor Prp18"/>
    <property type="match status" value="1"/>
</dbReference>
<dbReference type="Gene3D" id="2.130.10.10">
    <property type="entry name" value="YVTN repeat-like/Quinoprotein amine dehydrogenase"/>
    <property type="match status" value="1"/>
</dbReference>
<dbReference type="InterPro" id="IPR040251">
    <property type="entry name" value="SEC31-like"/>
</dbReference>
<dbReference type="InterPro" id="IPR009917">
    <property type="entry name" value="SRA1/Sec31"/>
</dbReference>
<dbReference type="InterPro" id="IPR015943">
    <property type="entry name" value="WD40/YVTN_repeat-like_dom_sf"/>
</dbReference>
<dbReference type="InterPro" id="IPR019775">
    <property type="entry name" value="WD40_repeat_CS"/>
</dbReference>
<dbReference type="InterPro" id="IPR036322">
    <property type="entry name" value="WD40_repeat_dom_sf"/>
</dbReference>
<dbReference type="InterPro" id="IPR001680">
    <property type="entry name" value="WD40_rpt"/>
</dbReference>
<dbReference type="PANTHER" id="PTHR13923">
    <property type="entry name" value="SEC31-RELATED PROTEIN"/>
    <property type="match status" value="1"/>
</dbReference>
<dbReference type="PANTHER" id="PTHR13923:SF11">
    <property type="entry name" value="SECRETORY 31, ISOFORM D"/>
    <property type="match status" value="1"/>
</dbReference>
<dbReference type="Pfam" id="PF07304">
    <property type="entry name" value="SRA1"/>
    <property type="match status" value="1"/>
</dbReference>
<dbReference type="Pfam" id="PF00400">
    <property type="entry name" value="WD40"/>
    <property type="match status" value="1"/>
</dbReference>
<dbReference type="SMART" id="SM00320">
    <property type="entry name" value="WD40"/>
    <property type="match status" value="6"/>
</dbReference>
<dbReference type="SUPFAM" id="SSF50978">
    <property type="entry name" value="WD40 repeat-like"/>
    <property type="match status" value="1"/>
</dbReference>
<dbReference type="PROSITE" id="PS00678">
    <property type="entry name" value="WD_REPEATS_1"/>
    <property type="match status" value="1"/>
</dbReference>
<dbReference type="PROSITE" id="PS50082">
    <property type="entry name" value="WD_REPEATS_2"/>
    <property type="match status" value="1"/>
</dbReference>
<dbReference type="PROSITE" id="PS50294">
    <property type="entry name" value="WD_REPEATS_REGION"/>
    <property type="match status" value="1"/>
</dbReference>
<organism>
    <name type="scientific">Schizosaccharomyces pombe (strain 972 / ATCC 24843)</name>
    <name type="common">Fission yeast</name>
    <dbReference type="NCBI Taxonomy" id="284812"/>
    <lineage>
        <taxon>Eukaryota</taxon>
        <taxon>Fungi</taxon>
        <taxon>Dikarya</taxon>
        <taxon>Ascomycota</taxon>
        <taxon>Taphrinomycotina</taxon>
        <taxon>Schizosaccharomycetes</taxon>
        <taxon>Schizosaccharomycetales</taxon>
        <taxon>Schizosaccharomycetaceae</taxon>
        <taxon>Schizosaccharomyces</taxon>
    </lineage>
</organism>
<feature type="chain" id="PRO_0000295446" description="Protein transport protein sec31">
    <location>
        <begin position="1"/>
        <end position="1224"/>
    </location>
</feature>
<feature type="repeat" description="WD 1">
    <location>
        <begin position="18"/>
        <end position="57"/>
    </location>
</feature>
<feature type="repeat" description="WD 2">
    <location>
        <begin position="61"/>
        <end position="104"/>
    </location>
</feature>
<feature type="repeat" description="WD 3">
    <location>
        <begin position="114"/>
        <end position="155"/>
    </location>
</feature>
<feature type="repeat" description="WD 4">
    <location>
        <begin position="160"/>
        <end position="200"/>
    </location>
</feature>
<feature type="repeat" description="WD 5">
    <location>
        <begin position="211"/>
        <end position="254"/>
    </location>
</feature>
<feature type="repeat" description="WD 6">
    <location>
        <begin position="258"/>
        <end position="300"/>
    </location>
</feature>
<feature type="repeat" description="WD 7">
    <location>
        <begin position="302"/>
        <end position="341"/>
    </location>
</feature>
<feature type="repeat" description="WD 8; interaction with sec13" evidence="2">
    <location>
        <begin position="388"/>
        <end position="410"/>
    </location>
</feature>
<feature type="region of interest" description="Disordered" evidence="3">
    <location>
        <begin position="480"/>
        <end position="512"/>
    </location>
</feature>
<feature type="region of interest" description="Disordered" evidence="3">
    <location>
        <begin position="840"/>
        <end position="866"/>
    </location>
</feature>
<feature type="region of interest" description="Disordered" evidence="3">
    <location>
        <begin position="879"/>
        <end position="1116"/>
    </location>
</feature>
<feature type="compositionally biased region" description="Polar residues" evidence="3">
    <location>
        <begin position="495"/>
        <end position="510"/>
    </location>
</feature>
<feature type="compositionally biased region" description="Low complexity" evidence="3">
    <location>
        <begin position="914"/>
        <end position="923"/>
    </location>
</feature>
<feature type="compositionally biased region" description="Low complexity" evidence="3">
    <location>
        <begin position="960"/>
        <end position="976"/>
    </location>
</feature>
<feature type="compositionally biased region" description="Low complexity" evidence="3">
    <location>
        <begin position="1035"/>
        <end position="1065"/>
    </location>
</feature>
<feature type="compositionally biased region" description="Low complexity" evidence="3">
    <location>
        <begin position="1093"/>
        <end position="1107"/>
    </location>
</feature>
<feature type="modified residue" description="Phosphothreonine" evidence="5">
    <location>
        <position position="499"/>
    </location>
</feature>
<feature type="modified residue" description="Phosphoserine" evidence="5">
    <location>
        <position position="1042"/>
    </location>
</feature>
<feature type="modified residue" description="Phosphoserine" evidence="5">
    <location>
        <position position="1044"/>
    </location>
</feature>
<comment type="function">
    <text evidence="1 4">Component of the coat protein complex II (COPII) which promotes the formation of transport vesicles from the endoplasmic reticulum (ER). The coat has two main functions, the physical deformation of the endoplasmic reticulum membrane into vesicles and the selection of cargo molecules (By similarity).</text>
</comment>
<comment type="subunit">
    <text evidence="1">The COPII coat is composed of at least 5 proteins: the sec23/24 complex, the sec13/31 complex, and the protein sar1. sec13 and sec31 make a 2:2 tetramer that forms the edge element of the COPII outer coat. The tetramer self-assembles in multiple copies to form the complete polyhedral cage. Interacts (via WD 8) with sec13 (By similarity).</text>
</comment>
<comment type="subcellular location">
    <subcellularLocation>
        <location evidence="1">Cytoplasmic vesicle</location>
        <location evidence="1">COPII-coated vesicle membrane</location>
        <topology evidence="1">Peripheral membrane protein</topology>
        <orientation evidence="1">Cytoplasmic side</orientation>
    </subcellularLocation>
    <subcellularLocation>
        <location evidence="1">Endoplasmic reticulum membrane</location>
        <topology evidence="1">Peripheral membrane protein</topology>
        <orientation evidence="1">Cytoplasmic side</orientation>
    </subcellularLocation>
</comment>
<comment type="similarity">
    <text evidence="6">Belongs to the WD repeat SEC31 family.</text>
</comment>
<proteinExistence type="evidence at protein level"/>
<name>SEC31_SCHPO</name>
<protein>
    <recommendedName>
        <fullName>Protein transport protein sec31</fullName>
    </recommendedName>
</protein>
<sequence length="1224" mass="132499">MRLKDISKTATLAWSPRGVNDNQALLALGGYTGTEGSKNSDTLLELWNENPESQKPVGSIDVKTRFYDLAWEKSLDKPMGVIAGSLEDGGIGFWDPAAILKSDEASASIATYKSENGSILGPLDFNRLQPNLLASGDNKGDVWVWDIKHPQQPFALPKQNRSSEVHVVSWNNKVSHILASGNATEYTTVWDVKLKRQVLNLSYLGAAGVSAATGAVNSIAWHPNNATRLATAIDDNRNPIILTWDLRQPTVPQNILTGHQKAALSLSWCPEDPTFLLSSGKDGRAMVWNVETGESLGSFPRSGNWYTKSSWCPSNSNRVAVASLEGKVSIFSIQSTNTDKSQEASIKGATSIDDNEFFNNLPSIAGSQEPSFSLPLAPKWFKVPVGARFGFPNKIVSFSPNSKEVTITSAPDEVEQDEAKSFHSSAKFQTEKEITDFCQKGVEESASEEEAINWKLLMAVSKRASRSKFAELLGYKTLKPKNDEDDSKVDESVAKDSTTPNELSKNANNENYDDDSSFYGKLAESVQEVSIADKKDAEIVKDSFKIFNPEDSDLEKNITEALLTGDVLSAVKACLEEKKISEALFLSTFGGKECRKCVRDAFYELQEHKPSYMRLSACIADNDLQNVVDNAEVSEWKDIFVFICTYATDDEFAPLCSTLGQRLEDLEDEKSIRSAEFCYIASKSLQSYANLWLKQLATSTKTSKAASAYGAYVEQLTKLMDKVSMFRSIVVYKDDELSATKDWKLAGLYEVYIAYAKILSASGKFDDAMSYLNLVPTEFPGAKEEIQRLTMLLEPHAVPPIHQIKQTGYAPVQPKTSQASSILPTVPRTTSYTSPYATTSSHITPADVHPLPPPSTSTTAGWNDAPMLGQLPMRRAAPSMAPVRSPFPGASSAQPAAMSRTSSVSTLPPPPPTASMTASAPAIASPPPPKVGETYHPPTASGTRVPPVQQPSHPNPYTPVAPQSPVAAASRISSSPNMPPSNPYTPIAVASSTVNPAHTYKPHGGSQIVPPPKQPANRVVPLPPTASQRASAYEPPTVSVPSPSALSPSVTPQLPPVSSRLPPVSATRPQIPQPPPVSTALPSSSAVSRPPIATSAGRSSTAASTSAPLTYPAGDRSHIPGNLRPIYEMLNAELQRVSQSLPPQMSRVVHDTEKRLNMLFDRLNSNVLSKPLTDELLALATSLNAHDYQTASNIQTNIVTTLGDQCEHWIVGVTRLITLSKSTT</sequence>
<accession>O13637</accession>
<evidence type="ECO:0000250" key="1"/>
<evidence type="ECO:0000255" key="2">
    <source>
        <dbReference type="PROSITE-ProRule" id="PRU00221"/>
    </source>
</evidence>
<evidence type="ECO:0000256" key="3">
    <source>
        <dbReference type="SAM" id="MobiDB-lite"/>
    </source>
</evidence>
<evidence type="ECO:0000269" key="4">
    <source>
    </source>
</evidence>
<evidence type="ECO:0000269" key="5">
    <source>
    </source>
</evidence>
<evidence type="ECO:0000305" key="6"/>
<gene>
    <name type="primary">sec31</name>
    <name type="ORF">SPBC8D2.20c</name>
</gene>